<gene>
    <name evidence="1" type="primary">gatE</name>
    <name type="ordered locus">OE_2929R</name>
</gene>
<name>GATE_HALS3</name>
<organism>
    <name type="scientific">Halobacterium salinarum (strain ATCC 29341 / DSM 671 / R1)</name>
    <dbReference type="NCBI Taxonomy" id="478009"/>
    <lineage>
        <taxon>Archaea</taxon>
        <taxon>Methanobacteriati</taxon>
        <taxon>Methanobacteriota</taxon>
        <taxon>Stenosarchaea group</taxon>
        <taxon>Halobacteria</taxon>
        <taxon>Halobacteriales</taxon>
        <taxon>Halobacteriaceae</taxon>
        <taxon>Halobacterium</taxon>
        <taxon>Halobacterium salinarum NRC-34001</taxon>
    </lineage>
</organism>
<dbReference type="EC" id="6.3.5.-" evidence="1"/>
<dbReference type="EMBL" id="AM774415">
    <property type="protein sequence ID" value="CAP13967.1"/>
    <property type="molecule type" value="Genomic_DNA"/>
</dbReference>
<dbReference type="RefSeq" id="WP_010902981.1">
    <property type="nucleotide sequence ID" value="NC_010364.1"/>
</dbReference>
<dbReference type="SMR" id="B0R5F0"/>
<dbReference type="EnsemblBacteria" id="CAP13967">
    <property type="protein sequence ID" value="CAP13967"/>
    <property type="gene ID" value="OE_2929R"/>
</dbReference>
<dbReference type="GeneID" id="68694090"/>
<dbReference type="KEGG" id="hsl:OE_2929R"/>
<dbReference type="HOGENOM" id="CLU_030702_0_0_2"/>
<dbReference type="PhylomeDB" id="B0R5F0"/>
<dbReference type="Proteomes" id="UP000001321">
    <property type="component" value="Chromosome"/>
</dbReference>
<dbReference type="GO" id="GO:0005737">
    <property type="term" value="C:cytoplasm"/>
    <property type="evidence" value="ECO:0007669"/>
    <property type="project" value="InterPro"/>
</dbReference>
<dbReference type="GO" id="GO:0004812">
    <property type="term" value="F:aminoacyl-tRNA ligase activity"/>
    <property type="evidence" value="ECO:0007669"/>
    <property type="project" value="InterPro"/>
</dbReference>
<dbReference type="GO" id="GO:0005524">
    <property type="term" value="F:ATP binding"/>
    <property type="evidence" value="ECO:0007669"/>
    <property type="project" value="UniProtKB-KW"/>
</dbReference>
<dbReference type="GO" id="GO:0050567">
    <property type="term" value="F:glutaminyl-tRNA synthase (glutamine-hydrolyzing) activity"/>
    <property type="evidence" value="ECO:0007669"/>
    <property type="project" value="UniProtKB-UniRule"/>
</dbReference>
<dbReference type="GO" id="GO:0070681">
    <property type="term" value="P:glutaminyl-tRNAGln biosynthesis via transamidation"/>
    <property type="evidence" value="ECO:0007669"/>
    <property type="project" value="TreeGrafter"/>
</dbReference>
<dbReference type="GO" id="GO:0006412">
    <property type="term" value="P:translation"/>
    <property type="evidence" value="ECO:0007669"/>
    <property type="project" value="UniProtKB-UniRule"/>
</dbReference>
<dbReference type="FunFam" id="1.10.10.410:FF:000003">
    <property type="entry name" value="Glutamyl-tRNA(Gln) amidotransferase subunit E"/>
    <property type="match status" value="1"/>
</dbReference>
<dbReference type="FunFam" id="1.10.150.380:FF:000002">
    <property type="entry name" value="Glutamyl-tRNA(Gln) amidotransferase subunit E"/>
    <property type="match status" value="1"/>
</dbReference>
<dbReference type="FunFam" id="3.30.1360.30:FF:000003">
    <property type="entry name" value="Glutamyl-tRNA(Gln) amidotransferase subunit E"/>
    <property type="match status" value="1"/>
</dbReference>
<dbReference type="Gene3D" id="1.10.10.410">
    <property type="match status" value="1"/>
</dbReference>
<dbReference type="Gene3D" id="3.30.1360.30">
    <property type="entry name" value="GAD-like domain"/>
    <property type="match status" value="1"/>
</dbReference>
<dbReference type="Gene3D" id="1.10.150.380">
    <property type="entry name" value="GatB domain, N-terminal subdomain"/>
    <property type="match status" value="1"/>
</dbReference>
<dbReference type="HAMAP" id="MF_00588">
    <property type="entry name" value="GatE"/>
    <property type="match status" value="1"/>
</dbReference>
<dbReference type="InterPro" id="IPR017959">
    <property type="entry name" value="Asn/Gln-tRNA_amidoTrfase_suB/E"/>
</dbReference>
<dbReference type="InterPro" id="IPR006075">
    <property type="entry name" value="Asn/Gln-tRNA_Trfase_suB/E_cat"/>
</dbReference>
<dbReference type="InterPro" id="IPR018027">
    <property type="entry name" value="Asn/Gln_amidotransferase"/>
</dbReference>
<dbReference type="InterPro" id="IPR003789">
    <property type="entry name" value="Asn/Gln_tRNA_amidoTrase-B-like"/>
</dbReference>
<dbReference type="InterPro" id="IPR004115">
    <property type="entry name" value="GAD-like_sf"/>
</dbReference>
<dbReference type="InterPro" id="IPR029351">
    <property type="entry name" value="GAD_dom"/>
</dbReference>
<dbReference type="InterPro" id="IPR042114">
    <property type="entry name" value="GatB_C_1"/>
</dbReference>
<dbReference type="InterPro" id="IPR023168">
    <property type="entry name" value="GatB_Yqey_C_2"/>
</dbReference>
<dbReference type="InterPro" id="IPR004414">
    <property type="entry name" value="GatE"/>
</dbReference>
<dbReference type="InterPro" id="IPR017958">
    <property type="entry name" value="Gln-tRNA_amidoTrfase_suB_CS"/>
</dbReference>
<dbReference type="InterPro" id="IPR014746">
    <property type="entry name" value="Gln_synth/guanido_kin_cat_dom"/>
</dbReference>
<dbReference type="NCBIfam" id="TIGR00134">
    <property type="entry name" value="gatE_arch"/>
    <property type="match status" value="1"/>
</dbReference>
<dbReference type="NCBIfam" id="NF003107">
    <property type="entry name" value="PRK04028.1"/>
    <property type="match status" value="1"/>
</dbReference>
<dbReference type="PANTHER" id="PTHR11659">
    <property type="entry name" value="GLUTAMYL-TRNA GLN AMIDOTRANSFERASE SUBUNIT B MITOCHONDRIAL AND PROKARYOTIC PET112-RELATED"/>
    <property type="match status" value="1"/>
</dbReference>
<dbReference type="PANTHER" id="PTHR11659:SF2">
    <property type="entry name" value="GLUTAMYL-TRNA(GLN) AMIDOTRANSFERASE SUBUNIT E"/>
    <property type="match status" value="1"/>
</dbReference>
<dbReference type="Pfam" id="PF02938">
    <property type="entry name" value="GAD"/>
    <property type="match status" value="1"/>
</dbReference>
<dbReference type="Pfam" id="PF02934">
    <property type="entry name" value="GatB_N"/>
    <property type="match status" value="1"/>
</dbReference>
<dbReference type="Pfam" id="PF02637">
    <property type="entry name" value="GatB_Yqey"/>
    <property type="match status" value="1"/>
</dbReference>
<dbReference type="SMART" id="SM00845">
    <property type="entry name" value="GatB_Yqey"/>
    <property type="match status" value="1"/>
</dbReference>
<dbReference type="SUPFAM" id="SSF55261">
    <property type="entry name" value="GAD domain-like"/>
    <property type="match status" value="1"/>
</dbReference>
<dbReference type="SUPFAM" id="SSF89095">
    <property type="entry name" value="GatB/YqeY motif"/>
    <property type="match status" value="1"/>
</dbReference>
<dbReference type="SUPFAM" id="SSF55931">
    <property type="entry name" value="Glutamine synthetase/guanido kinase"/>
    <property type="match status" value="1"/>
</dbReference>
<dbReference type="PROSITE" id="PS01234">
    <property type="entry name" value="GATB"/>
    <property type="match status" value="1"/>
</dbReference>
<reference key="1">
    <citation type="journal article" date="2008" name="Genomics">
        <title>Evolution in the laboratory: the genome of Halobacterium salinarum strain R1 compared to that of strain NRC-1.</title>
        <authorList>
            <person name="Pfeiffer F."/>
            <person name="Schuster S.C."/>
            <person name="Broicher A."/>
            <person name="Falb M."/>
            <person name="Palm P."/>
            <person name="Rodewald K."/>
            <person name="Ruepp A."/>
            <person name="Soppa J."/>
            <person name="Tittor J."/>
            <person name="Oesterhelt D."/>
        </authorList>
    </citation>
    <scope>NUCLEOTIDE SEQUENCE [LARGE SCALE GENOMIC DNA]</scope>
    <source>
        <strain>ATCC 29341 / DSM 671 / R1</strain>
    </source>
</reference>
<proteinExistence type="inferred from homology"/>
<sequence>MTEFDYDELGLVAGLEIHQQLDTATKLFCACPTTRREPAEADRTFTRYLHPTRSELGEIDEAALEESRVEREFEYLAYDTTCLVEEDDEPPHRLDEDALAAALEIGHLLGMDAVDRAHVMRKVVIDGSNTGGFQRSTMVAEGGAIDTSEGPVGIEDLMLEEESAQRIEDREDGVLYSLDRLGIPLVEIGTKPDISSPAQAREAAERIGMLLRSTGKVKRGLGTIRQDVNVSIADGARVEMKGVQSLDDIDDLVREEVRRQVELLDIVDELDARDAAVGKPRDVTDVFADTESGVIRGALDDGGEVHAVPLHGFDGLVGRELQADRRLGTEFSDHATRHGAGGIFHTDELPAYGVTAAEVAALRDAVGAGEDDAVAIVADDPETAAQSIQAVAERAETAMAGVPEETRGANDDGTSKYLRPLPGAARMYPETDVPPVDPDPSAVETPELLTEKVERYQADFDLDAGLAEQVAYGRRWQLFEQQVEAGVDATLAAQTLESTVTELRRDDVPVGRLTDAHFRGVLGLVADGDLAQEGVPELLAALAEQPGSDPAVLAEELGLGSAAEDEVREAVVGVVERNSDQVAAEGMGAFSALMGECMGALRGKADGDLVSEVLREEIQQRS</sequence>
<comment type="function">
    <text evidence="1">Allows the formation of correctly charged Gln-tRNA(Gln) through the transamidation of misacylated Glu-tRNA(Gln) in organisms which lack glutaminyl-tRNA synthetase. The reaction takes place in the presence of glutamine and ATP through an activated gamma-phospho-Glu-tRNA(Gln). The GatDE system is specific for glutamate and does not act on aspartate.</text>
</comment>
<comment type="catalytic activity">
    <reaction evidence="1">
        <text>L-glutamyl-tRNA(Gln) + L-glutamine + ATP + H2O = L-glutaminyl-tRNA(Gln) + L-glutamate + ADP + phosphate + H(+)</text>
        <dbReference type="Rhea" id="RHEA:17521"/>
        <dbReference type="Rhea" id="RHEA-COMP:9681"/>
        <dbReference type="Rhea" id="RHEA-COMP:9684"/>
        <dbReference type="ChEBI" id="CHEBI:15377"/>
        <dbReference type="ChEBI" id="CHEBI:15378"/>
        <dbReference type="ChEBI" id="CHEBI:29985"/>
        <dbReference type="ChEBI" id="CHEBI:30616"/>
        <dbReference type="ChEBI" id="CHEBI:43474"/>
        <dbReference type="ChEBI" id="CHEBI:58359"/>
        <dbReference type="ChEBI" id="CHEBI:78520"/>
        <dbReference type="ChEBI" id="CHEBI:78521"/>
        <dbReference type="ChEBI" id="CHEBI:456216"/>
    </reaction>
</comment>
<comment type="subunit">
    <text evidence="1">Heterodimer of GatD and GatE.</text>
</comment>
<comment type="similarity">
    <text evidence="1">Belongs to the GatB/GatE family. GatE subfamily.</text>
</comment>
<keyword id="KW-0067">ATP-binding</keyword>
<keyword id="KW-0436">Ligase</keyword>
<keyword id="KW-0547">Nucleotide-binding</keyword>
<keyword id="KW-0648">Protein biosynthesis</keyword>
<evidence type="ECO:0000255" key="1">
    <source>
        <dbReference type="HAMAP-Rule" id="MF_00588"/>
    </source>
</evidence>
<protein>
    <recommendedName>
        <fullName evidence="1">Glutamyl-tRNA(Gln) amidotransferase subunit E</fullName>
        <shortName evidence="1">Glu-ADT subunit E</shortName>
        <ecNumber evidence="1">6.3.5.-</ecNumber>
    </recommendedName>
</protein>
<accession>B0R5F0</accession>
<feature type="chain" id="PRO_1000129788" description="Glutamyl-tRNA(Gln) amidotransferase subunit E">
    <location>
        <begin position="1"/>
        <end position="622"/>
    </location>
</feature>